<comment type="function">
    <text evidence="2 3">Receptor for the C-terminal sequence motif K-D-E-L that is present on endoplasmic reticulum resident proteins and that mediates their recycling from the Golgi back to the endoplasmic reticulum (By similarity). Binding is pH dependent, and is optimal at pH 5-5.4 (By similarity).</text>
</comment>
<comment type="subcellular location">
    <subcellularLocation>
        <location evidence="2">Endoplasmic reticulum membrane</location>
        <topology evidence="3">Multi-pass membrane protein</topology>
    </subcellularLocation>
    <subcellularLocation>
        <location evidence="2">Golgi apparatus membrane</location>
        <topology evidence="3">Multi-pass membrane protein</topology>
    </subcellularLocation>
    <subcellularLocation>
        <location evidence="2">Cytoplasmic vesicle</location>
        <location evidence="2">COPI-coated vesicle membrane</location>
        <topology evidence="3">Multi-pass membrane protein</topology>
    </subcellularLocation>
    <text evidence="2">Localized in the Golgi in the absence of bound proteins with the sequence motif K-D-E-L. Trafficks back to the endoplasmic reticulum together with cargo proteins containing the sequence motif K-D-E-L.</text>
</comment>
<comment type="domain">
    <text evidence="1 3">Binds the C-terminal sequence motif K-D-E-L in a hydrophilic cavity between the transmembrane domains. This triggers a conformation change that exposes a Lys-rich patch on the cytosolic surface of the protein (By similarity). This patch mediates recycling from the Golgi to the endoplasmic reticulum, probably via COPI vesicles (By similarity).</text>
</comment>
<comment type="similarity">
    <text evidence="4">Belongs to the ERD2 family.</text>
</comment>
<name>ERD22_DANRE</name>
<protein>
    <recommendedName>
        <fullName>ER lumen protein-retaining receptor 2</fullName>
    </recommendedName>
    <alternativeName>
        <fullName>KDEL endoplasmic reticulum protein retention receptor 2</fullName>
        <shortName>KDEL receptor 2</shortName>
    </alternativeName>
</protein>
<evidence type="ECO:0000250" key="1">
    <source>
        <dbReference type="UniProtKB" id="P24390"/>
    </source>
</evidence>
<evidence type="ECO:0000250" key="2">
    <source>
        <dbReference type="UniProtKB" id="P33947"/>
    </source>
</evidence>
<evidence type="ECO:0000250" key="3">
    <source>
        <dbReference type="UniProtKB" id="Q5ZKX9"/>
    </source>
</evidence>
<evidence type="ECO:0000305" key="4"/>
<keyword id="KW-0968">Cytoplasmic vesicle</keyword>
<keyword id="KW-0256">Endoplasmic reticulum</keyword>
<keyword id="KW-0931">ER-Golgi transport</keyword>
<keyword id="KW-0333">Golgi apparatus</keyword>
<keyword id="KW-0472">Membrane</keyword>
<keyword id="KW-0653">Protein transport</keyword>
<keyword id="KW-0675">Receptor</keyword>
<keyword id="KW-1185">Reference proteome</keyword>
<keyword id="KW-0812">Transmembrane</keyword>
<keyword id="KW-1133">Transmembrane helix</keyword>
<keyword id="KW-0813">Transport</keyword>
<dbReference type="EMBL" id="BC056773">
    <property type="protein sequence ID" value="AAH56773.1"/>
    <property type="molecule type" value="mRNA"/>
</dbReference>
<dbReference type="EMBL" id="BC058065">
    <property type="protein sequence ID" value="AAH58065.1"/>
    <property type="molecule type" value="mRNA"/>
</dbReference>
<dbReference type="RefSeq" id="NP_956397.1">
    <property type="nucleotide sequence ID" value="NM_200103.1"/>
</dbReference>
<dbReference type="SMR" id="Q6PEH1"/>
<dbReference type="FunCoup" id="Q6PEH1">
    <property type="interactions" value="2226"/>
</dbReference>
<dbReference type="STRING" id="7955.ENSDARP00000011420"/>
<dbReference type="PaxDb" id="7955-ENSDARP00000011420"/>
<dbReference type="Ensembl" id="ENSDART00000027630">
    <property type="protein sequence ID" value="ENSDARP00000011420"/>
    <property type="gene ID" value="ENSDARG00000005254"/>
</dbReference>
<dbReference type="GeneID" id="373129"/>
<dbReference type="KEGG" id="dre:373129"/>
<dbReference type="AGR" id="ZFIN:ZDB-GENE-030826-32"/>
<dbReference type="CTD" id="373129"/>
<dbReference type="ZFIN" id="ZDB-GENE-030826-32">
    <property type="gene designation" value="kdelr2a"/>
</dbReference>
<dbReference type="eggNOG" id="KOG3106">
    <property type="taxonomic scope" value="Eukaryota"/>
</dbReference>
<dbReference type="HOGENOM" id="CLU_057784_0_0_1"/>
<dbReference type="InParanoid" id="Q6PEH1"/>
<dbReference type="OMA" id="RTMKSCA"/>
<dbReference type="OrthoDB" id="7694678at2759"/>
<dbReference type="PhylomeDB" id="Q6PEH1"/>
<dbReference type="TreeFam" id="TF314792"/>
<dbReference type="Reactome" id="R-DRE-6811434">
    <property type="pathway name" value="COPI-dependent Golgi-to-ER retrograde traffic"/>
</dbReference>
<dbReference type="PRO" id="PR:Q6PEH1"/>
<dbReference type="Proteomes" id="UP000000437">
    <property type="component" value="Chromosome 3"/>
</dbReference>
<dbReference type="Bgee" id="ENSDARG00000005254">
    <property type="expression patterns" value="Expressed in swim bladder and 47 other cell types or tissues"/>
</dbReference>
<dbReference type="GO" id="GO:0005801">
    <property type="term" value="C:cis-Golgi network"/>
    <property type="evidence" value="ECO:0000318"/>
    <property type="project" value="GO_Central"/>
</dbReference>
<dbReference type="GO" id="GO:0030663">
    <property type="term" value="C:COPI-coated vesicle membrane"/>
    <property type="evidence" value="ECO:0007669"/>
    <property type="project" value="UniProtKB-SubCell"/>
</dbReference>
<dbReference type="GO" id="GO:0005783">
    <property type="term" value="C:endoplasmic reticulum"/>
    <property type="evidence" value="ECO:0000318"/>
    <property type="project" value="GO_Central"/>
</dbReference>
<dbReference type="GO" id="GO:0005789">
    <property type="term" value="C:endoplasmic reticulum membrane"/>
    <property type="evidence" value="ECO:0000250"/>
    <property type="project" value="UniProtKB"/>
</dbReference>
<dbReference type="GO" id="GO:0000139">
    <property type="term" value="C:Golgi membrane"/>
    <property type="evidence" value="ECO:0000250"/>
    <property type="project" value="UniProtKB"/>
</dbReference>
<dbReference type="GO" id="GO:0016020">
    <property type="term" value="C:membrane"/>
    <property type="evidence" value="ECO:0000250"/>
    <property type="project" value="UniProtKB"/>
</dbReference>
<dbReference type="GO" id="GO:0046923">
    <property type="term" value="F:ER retention sequence binding"/>
    <property type="evidence" value="ECO:0000318"/>
    <property type="project" value="GO_Central"/>
</dbReference>
<dbReference type="GO" id="GO:0005046">
    <property type="term" value="F:KDEL sequence binding"/>
    <property type="evidence" value="ECO:0000250"/>
    <property type="project" value="UniProtKB"/>
</dbReference>
<dbReference type="GO" id="GO:0006621">
    <property type="term" value="P:protein retention in ER lumen"/>
    <property type="evidence" value="ECO:0000318"/>
    <property type="project" value="GO_Central"/>
</dbReference>
<dbReference type="GO" id="GO:0015031">
    <property type="term" value="P:protein transport"/>
    <property type="evidence" value="ECO:0007669"/>
    <property type="project" value="UniProtKB-KW"/>
</dbReference>
<dbReference type="GO" id="GO:0006890">
    <property type="term" value="P:retrograde vesicle-mediated transport, Golgi to endoplasmic reticulum"/>
    <property type="evidence" value="ECO:0000250"/>
    <property type="project" value="UniProtKB"/>
</dbReference>
<dbReference type="InterPro" id="IPR000133">
    <property type="entry name" value="ER_ret_rcpt"/>
</dbReference>
<dbReference type="PANTHER" id="PTHR10585">
    <property type="entry name" value="ER LUMEN PROTEIN RETAINING RECEPTOR"/>
    <property type="match status" value="1"/>
</dbReference>
<dbReference type="Pfam" id="PF00810">
    <property type="entry name" value="ER_lumen_recept"/>
    <property type="match status" value="1"/>
</dbReference>
<dbReference type="PRINTS" id="PR00660">
    <property type="entry name" value="ERLUMENR"/>
</dbReference>
<dbReference type="PROSITE" id="PS00951">
    <property type="entry name" value="ER_LUMEN_RECEPTOR_1"/>
    <property type="match status" value="1"/>
</dbReference>
<dbReference type="PROSITE" id="PS00952">
    <property type="entry name" value="ER_LUMEN_RECEPTOR_2"/>
    <property type="match status" value="1"/>
</dbReference>
<accession>Q6PEH1</accession>
<reference key="1">
    <citation type="submission" date="2003-09" db="EMBL/GenBank/DDBJ databases">
        <authorList>
            <consortium name="NIH - Zebrafish Gene Collection (ZGC) project"/>
        </authorList>
    </citation>
    <scope>NUCLEOTIDE SEQUENCE [LARGE SCALE MRNA]</scope>
    <source>
        <strain>AB</strain>
    </source>
</reference>
<organism>
    <name type="scientific">Danio rerio</name>
    <name type="common">Zebrafish</name>
    <name type="synonym">Brachydanio rerio</name>
    <dbReference type="NCBI Taxonomy" id="7955"/>
    <lineage>
        <taxon>Eukaryota</taxon>
        <taxon>Metazoa</taxon>
        <taxon>Chordata</taxon>
        <taxon>Craniata</taxon>
        <taxon>Vertebrata</taxon>
        <taxon>Euteleostomi</taxon>
        <taxon>Actinopterygii</taxon>
        <taxon>Neopterygii</taxon>
        <taxon>Teleostei</taxon>
        <taxon>Ostariophysi</taxon>
        <taxon>Cypriniformes</taxon>
        <taxon>Danionidae</taxon>
        <taxon>Danioninae</taxon>
        <taxon>Danio</taxon>
    </lineage>
</organism>
<proteinExistence type="evidence at transcript level"/>
<sequence>MNIFRLTGDLSHLAAIIILLLKIWKSRSCAGISGKSQILFALVFTTRYLDLLTSFISLYNTCMKVIYIGCAYATVYLIYAKFRATYDGNHDTFRAEFLVVPVGGLAFLVNHDFSPLEILWTFSIYLESVAILPQLFMISKTGEAETITTHYLFCLGVYRALYLFNWIWRFYFEGFFDMIAIVAGVVQTILYCDFFYLYVTKVLKGKKLSLPA</sequence>
<feature type="chain" id="PRO_0000252349" description="ER lumen protein-retaining receptor 2">
    <location>
        <begin position="1"/>
        <end position="212"/>
    </location>
</feature>
<feature type="topological domain" description="Lumenal" evidence="4">
    <location>
        <begin position="1"/>
        <end position="4"/>
    </location>
</feature>
<feature type="transmembrane region" description="Helical" evidence="3">
    <location>
        <begin position="5"/>
        <end position="24"/>
    </location>
</feature>
<feature type="topological domain" description="Cytoplasmic" evidence="4">
    <location>
        <begin position="25"/>
        <end position="32"/>
    </location>
</feature>
<feature type="transmembrane region" description="Helical" evidence="3">
    <location>
        <begin position="33"/>
        <end position="52"/>
    </location>
</feature>
<feature type="topological domain" description="Lumenal" evidence="4">
    <location>
        <begin position="53"/>
        <end position="58"/>
    </location>
</feature>
<feature type="transmembrane region" description="Helical" evidence="3">
    <location>
        <begin position="59"/>
        <end position="79"/>
    </location>
</feature>
<feature type="topological domain" description="Cytoplasmic" evidence="4">
    <location>
        <begin position="80"/>
        <end position="92"/>
    </location>
</feature>
<feature type="transmembrane region" description="Helical" evidence="3">
    <location>
        <begin position="93"/>
        <end position="110"/>
    </location>
</feature>
<feature type="topological domain" description="Lumenal" evidence="4">
    <location>
        <begin position="111"/>
        <end position="116"/>
    </location>
</feature>
<feature type="transmembrane region" description="Helical" evidence="3">
    <location>
        <begin position="117"/>
        <end position="135"/>
    </location>
</feature>
<feature type="topological domain" description="Cytoplasmic" evidence="4">
    <location>
        <begin position="136"/>
        <end position="149"/>
    </location>
</feature>
<feature type="transmembrane region" description="Helical" evidence="3">
    <location>
        <begin position="150"/>
        <end position="168"/>
    </location>
</feature>
<feature type="topological domain" description="Lumenal" evidence="4">
    <location>
        <begin position="169"/>
        <end position="178"/>
    </location>
</feature>
<feature type="transmembrane region" description="Helical" evidence="3">
    <location>
        <begin position="179"/>
        <end position="199"/>
    </location>
</feature>
<feature type="topological domain" description="Cytoplasmic" evidence="4">
    <location>
        <begin position="200"/>
        <end position="212"/>
    </location>
</feature>
<feature type="region of interest" description="Interaction with the K-D-E-L motif on target proteins" evidence="3">
    <location>
        <begin position="47"/>
        <end position="48"/>
    </location>
</feature>
<feature type="region of interest" description="Interaction with the K-D-E-L motif on target proteins" evidence="3">
    <location>
        <begin position="159"/>
        <end position="169"/>
    </location>
</feature>
<feature type="region of interest" description="Important for recycling of cargo proteins with the sequence motif K-D-E-L from the Golgi to the endoplasmic reticulum" evidence="1">
    <location>
        <begin position="204"/>
        <end position="207"/>
    </location>
</feature>
<feature type="site" description="Interaction with the K-D-E-L motif on target proteins" evidence="3">
    <location>
        <position position="5"/>
    </location>
</feature>
<feature type="site" description="Interaction with the K-D-E-L motif on target proteins" evidence="3">
    <location>
        <position position="54"/>
    </location>
</feature>
<feature type="site" description="Interaction with the K-D-E-L motif on target proteins" evidence="3">
    <location>
        <position position="117"/>
    </location>
</feature>
<feature type="site" description="Important for recycling of cargo proteins with the sequence motif K-D-E-L from the Golgi to the endoplasmic reticulum" evidence="1">
    <location>
        <position position="193"/>
    </location>
</feature>
<gene>
    <name type="primary">kdelr2</name>
</gene>